<protein>
    <recommendedName>
        <fullName>Proline-rich protein 9</fullName>
    </recommendedName>
</protein>
<gene>
    <name type="primary">PRR9</name>
</gene>
<reference key="1">
    <citation type="journal article" date="2006" name="Nature">
        <title>The DNA sequence and biological annotation of human chromosome 1.</title>
        <authorList>
            <person name="Gregory S.G."/>
            <person name="Barlow K.F."/>
            <person name="McLay K.E."/>
            <person name="Kaul R."/>
            <person name="Swarbreck D."/>
            <person name="Dunham A."/>
            <person name="Scott C.E."/>
            <person name="Howe K.L."/>
            <person name="Woodfine K."/>
            <person name="Spencer C.C.A."/>
            <person name="Jones M.C."/>
            <person name="Gillson C."/>
            <person name="Searle S."/>
            <person name="Zhou Y."/>
            <person name="Kokocinski F."/>
            <person name="McDonald L."/>
            <person name="Evans R."/>
            <person name="Phillips K."/>
            <person name="Atkinson A."/>
            <person name="Cooper R."/>
            <person name="Jones C."/>
            <person name="Hall R.E."/>
            <person name="Andrews T.D."/>
            <person name="Lloyd C."/>
            <person name="Ainscough R."/>
            <person name="Almeida J.P."/>
            <person name="Ambrose K.D."/>
            <person name="Anderson F."/>
            <person name="Andrew R.W."/>
            <person name="Ashwell R.I.S."/>
            <person name="Aubin K."/>
            <person name="Babbage A.K."/>
            <person name="Bagguley C.L."/>
            <person name="Bailey J."/>
            <person name="Beasley H."/>
            <person name="Bethel G."/>
            <person name="Bird C.P."/>
            <person name="Bray-Allen S."/>
            <person name="Brown J.Y."/>
            <person name="Brown A.J."/>
            <person name="Buckley D."/>
            <person name="Burton J."/>
            <person name="Bye J."/>
            <person name="Carder C."/>
            <person name="Chapman J.C."/>
            <person name="Clark S.Y."/>
            <person name="Clarke G."/>
            <person name="Clee C."/>
            <person name="Cobley V."/>
            <person name="Collier R.E."/>
            <person name="Corby N."/>
            <person name="Coville G.J."/>
            <person name="Davies J."/>
            <person name="Deadman R."/>
            <person name="Dunn M."/>
            <person name="Earthrowl M."/>
            <person name="Ellington A.G."/>
            <person name="Errington H."/>
            <person name="Frankish A."/>
            <person name="Frankland J."/>
            <person name="French L."/>
            <person name="Garner P."/>
            <person name="Garnett J."/>
            <person name="Gay L."/>
            <person name="Ghori M.R.J."/>
            <person name="Gibson R."/>
            <person name="Gilby L.M."/>
            <person name="Gillett W."/>
            <person name="Glithero R.J."/>
            <person name="Grafham D.V."/>
            <person name="Griffiths C."/>
            <person name="Griffiths-Jones S."/>
            <person name="Grocock R."/>
            <person name="Hammond S."/>
            <person name="Harrison E.S.I."/>
            <person name="Hart E."/>
            <person name="Haugen E."/>
            <person name="Heath P.D."/>
            <person name="Holmes S."/>
            <person name="Holt K."/>
            <person name="Howden P.J."/>
            <person name="Hunt A.R."/>
            <person name="Hunt S.E."/>
            <person name="Hunter G."/>
            <person name="Isherwood J."/>
            <person name="James R."/>
            <person name="Johnson C."/>
            <person name="Johnson D."/>
            <person name="Joy A."/>
            <person name="Kay M."/>
            <person name="Kershaw J.K."/>
            <person name="Kibukawa M."/>
            <person name="Kimberley A.M."/>
            <person name="King A."/>
            <person name="Knights A.J."/>
            <person name="Lad H."/>
            <person name="Laird G."/>
            <person name="Lawlor S."/>
            <person name="Leongamornlert D.A."/>
            <person name="Lloyd D.M."/>
            <person name="Loveland J."/>
            <person name="Lovell J."/>
            <person name="Lush M.J."/>
            <person name="Lyne R."/>
            <person name="Martin S."/>
            <person name="Mashreghi-Mohammadi M."/>
            <person name="Matthews L."/>
            <person name="Matthews N.S.W."/>
            <person name="McLaren S."/>
            <person name="Milne S."/>
            <person name="Mistry S."/>
            <person name="Moore M.J.F."/>
            <person name="Nickerson T."/>
            <person name="O'Dell C.N."/>
            <person name="Oliver K."/>
            <person name="Palmeiri A."/>
            <person name="Palmer S.A."/>
            <person name="Parker A."/>
            <person name="Patel D."/>
            <person name="Pearce A.V."/>
            <person name="Peck A.I."/>
            <person name="Pelan S."/>
            <person name="Phelps K."/>
            <person name="Phillimore B.J."/>
            <person name="Plumb R."/>
            <person name="Rajan J."/>
            <person name="Raymond C."/>
            <person name="Rouse G."/>
            <person name="Saenphimmachak C."/>
            <person name="Sehra H.K."/>
            <person name="Sheridan E."/>
            <person name="Shownkeen R."/>
            <person name="Sims S."/>
            <person name="Skuce C.D."/>
            <person name="Smith M."/>
            <person name="Steward C."/>
            <person name="Subramanian S."/>
            <person name="Sycamore N."/>
            <person name="Tracey A."/>
            <person name="Tromans A."/>
            <person name="Van Helmond Z."/>
            <person name="Wall M."/>
            <person name="Wallis J.M."/>
            <person name="White S."/>
            <person name="Whitehead S.L."/>
            <person name="Wilkinson J.E."/>
            <person name="Willey D.L."/>
            <person name="Williams H."/>
            <person name="Wilming L."/>
            <person name="Wray P.W."/>
            <person name="Wu Z."/>
            <person name="Coulson A."/>
            <person name="Vaudin M."/>
            <person name="Sulston J.E."/>
            <person name="Durbin R.M."/>
            <person name="Hubbard T."/>
            <person name="Wooster R."/>
            <person name="Dunham I."/>
            <person name="Carter N.P."/>
            <person name="McVean G."/>
            <person name="Ross M.T."/>
            <person name="Harrow J."/>
            <person name="Olson M.V."/>
            <person name="Beck S."/>
            <person name="Rogers J."/>
            <person name="Bentley D.R."/>
        </authorList>
    </citation>
    <scope>NUCLEOTIDE SEQUENCE [LARGE SCALE GENOMIC DNA]</scope>
</reference>
<keyword id="KW-1267">Proteomics identification</keyword>
<keyword id="KW-1185">Reference proteome</keyword>
<feature type="chain" id="PRO_0000334688" description="Proline-rich protein 9">
    <location>
        <begin position="1"/>
        <end position="116"/>
    </location>
</feature>
<dbReference type="EMBL" id="AL161636">
    <property type="status" value="NOT_ANNOTATED_CDS"/>
    <property type="molecule type" value="Genomic_DNA"/>
</dbReference>
<dbReference type="CCDS" id="CCDS55639.1"/>
<dbReference type="RefSeq" id="NP_001182500.1">
    <property type="nucleotide sequence ID" value="NM_001195571.2"/>
</dbReference>
<dbReference type="STRING" id="9606.ENSP00000357733"/>
<dbReference type="BioMuta" id="PRR9"/>
<dbReference type="DMDM" id="74745483"/>
<dbReference type="MassIVE" id="Q5T870"/>
<dbReference type="PaxDb" id="9606-ENSP00000357733"/>
<dbReference type="PeptideAtlas" id="Q5T870"/>
<dbReference type="ProteomicsDB" id="64712"/>
<dbReference type="Antibodypedia" id="50370">
    <property type="antibodies" value="8 antibodies from 7 providers"/>
</dbReference>
<dbReference type="DNASU" id="574414"/>
<dbReference type="Ensembl" id="ENST00000368744.4">
    <property type="protein sequence ID" value="ENSP00000357733.3"/>
    <property type="gene ID" value="ENSG00000203783.5"/>
</dbReference>
<dbReference type="GeneID" id="574414"/>
<dbReference type="KEGG" id="hsa:574414"/>
<dbReference type="MANE-Select" id="ENST00000368744.4">
    <property type="protein sequence ID" value="ENSP00000357733.3"/>
    <property type="RefSeq nucleotide sequence ID" value="NM_001195571.2"/>
    <property type="RefSeq protein sequence ID" value="NP_001182500.1"/>
</dbReference>
<dbReference type="UCSC" id="uc021ozw.1">
    <property type="organism name" value="human"/>
</dbReference>
<dbReference type="AGR" id="HGNC:32057"/>
<dbReference type="CTD" id="574414"/>
<dbReference type="DisGeNET" id="574414"/>
<dbReference type="GeneCards" id="PRR9"/>
<dbReference type="HGNC" id="HGNC:32057">
    <property type="gene designation" value="PRR9"/>
</dbReference>
<dbReference type="HPA" id="ENSG00000203783">
    <property type="expression patterns" value="Tissue enriched (skin)"/>
</dbReference>
<dbReference type="neXtProt" id="NX_Q5T870"/>
<dbReference type="OpenTargets" id="ENSG00000203783"/>
<dbReference type="VEuPathDB" id="HostDB:ENSG00000203783"/>
<dbReference type="eggNOG" id="ENOG502TDD1">
    <property type="taxonomic scope" value="Eukaryota"/>
</dbReference>
<dbReference type="GeneTree" id="ENSGT00700000104637"/>
<dbReference type="HOGENOM" id="CLU_136290_0_0_1"/>
<dbReference type="InParanoid" id="Q5T870"/>
<dbReference type="OMA" id="SFNEQQC"/>
<dbReference type="OrthoDB" id="9835460at2759"/>
<dbReference type="PAN-GO" id="Q5T870">
    <property type="GO annotations" value="0 GO annotations based on evolutionary models"/>
</dbReference>
<dbReference type="PhylomeDB" id="Q5T870"/>
<dbReference type="TreeFam" id="TF339356"/>
<dbReference type="PathwayCommons" id="Q5T870"/>
<dbReference type="SignaLink" id="Q5T870"/>
<dbReference type="BioGRID-ORCS" id="574414">
    <property type="hits" value="12 hits in 1135 CRISPR screens"/>
</dbReference>
<dbReference type="Pharos" id="Q5T870">
    <property type="development level" value="Tdark"/>
</dbReference>
<dbReference type="PRO" id="PR:Q5T870"/>
<dbReference type="Proteomes" id="UP000005640">
    <property type="component" value="Chromosome 1"/>
</dbReference>
<dbReference type="RNAct" id="Q5T870">
    <property type="molecule type" value="protein"/>
</dbReference>
<dbReference type="Bgee" id="ENSG00000203783">
    <property type="expression patterns" value="Expressed in upper arm skin and 70 other cell types or tissues"/>
</dbReference>
<dbReference type="InterPro" id="IPR052888">
    <property type="entry name" value="PRR9"/>
</dbReference>
<dbReference type="PANTHER" id="PTHR48427">
    <property type="entry name" value="PROLINE-RICH PROTEIN 9"/>
    <property type="match status" value="1"/>
</dbReference>
<dbReference type="PANTHER" id="PTHR48427:SF1">
    <property type="entry name" value="PROLINE-RICH PROTEIN 9"/>
    <property type="match status" value="1"/>
</dbReference>
<dbReference type="PRINTS" id="PR00021">
    <property type="entry name" value="PRORICH"/>
</dbReference>
<accession>Q5T870</accession>
<sequence>MSFSEQQCKQPCVPPPCLPKTQEQCQAKAEEVCLPTCQHPCQDKCLVQAQEVCLSQCQESSQEKCPQQGQEPYLPPCQDQCPPQCAEPCQELFQTKCVEVCPQKVQEKCSSPGKGK</sequence>
<name>PRR9_HUMAN</name>
<proteinExistence type="evidence at protein level"/>
<organism>
    <name type="scientific">Homo sapiens</name>
    <name type="common">Human</name>
    <dbReference type="NCBI Taxonomy" id="9606"/>
    <lineage>
        <taxon>Eukaryota</taxon>
        <taxon>Metazoa</taxon>
        <taxon>Chordata</taxon>
        <taxon>Craniata</taxon>
        <taxon>Vertebrata</taxon>
        <taxon>Euteleostomi</taxon>
        <taxon>Mammalia</taxon>
        <taxon>Eutheria</taxon>
        <taxon>Euarchontoglires</taxon>
        <taxon>Primates</taxon>
        <taxon>Haplorrhini</taxon>
        <taxon>Catarrhini</taxon>
        <taxon>Hominidae</taxon>
        <taxon>Homo</taxon>
    </lineage>
</organism>